<keyword id="KW-0227">DNA damage</keyword>
<keyword id="KW-0234">DNA repair</keyword>
<keyword id="KW-0255">Endonuclease</keyword>
<keyword id="KW-0378">Hydrolase</keyword>
<keyword id="KW-0479">Metal-binding</keyword>
<keyword id="KW-0540">Nuclease</keyword>
<keyword id="KW-0862">Zinc</keyword>
<protein>
    <recommendedName>
        <fullName evidence="1">Probable endonuclease 4</fullName>
        <ecNumber evidence="1">3.1.21.2</ecNumber>
    </recommendedName>
    <alternativeName>
        <fullName evidence="1">Endodeoxyribonuclease IV</fullName>
    </alternativeName>
    <alternativeName>
        <fullName evidence="1">Endonuclease IV</fullName>
    </alternativeName>
</protein>
<accession>B8D8T8</accession>
<name>END4_BUCA5</name>
<evidence type="ECO:0000255" key="1">
    <source>
        <dbReference type="HAMAP-Rule" id="MF_00152"/>
    </source>
</evidence>
<proteinExistence type="inferred from homology"/>
<gene>
    <name evidence="1" type="primary">nfo</name>
    <name type="ordered locus">BUAP5A_135</name>
</gene>
<reference key="1">
    <citation type="journal article" date="2009" name="Science">
        <title>The dynamics and time scale of ongoing genomic erosion in symbiotic bacteria.</title>
        <authorList>
            <person name="Moran N.A."/>
            <person name="McLaughlin H.J."/>
            <person name="Sorek R."/>
        </authorList>
    </citation>
    <scope>NUCLEOTIDE SEQUENCE [LARGE SCALE GENOMIC DNA]</scope>
    <source>
        <strain>5A</strain>
    </source>
</reference>
<dbReference type="EC" id="3.1.21.2" evidence="1"/>
<dbReference type="EMBL" id="CP001161">
    <property type="protein sequence ID" value="ACL30510.1"/>
    <property type="molecule type" value="Genomic_DNA"/>
</dbReference>
<dbReference type="RefSeq" id="WP_009874093.1">
    <property type="nucleotide sequence ID" value="NC_011833.1"/>
</dbReference>
<dbReference type="SMR" id="B8D8T8"/>
<dbReference type="KEGG" id="bap:BUAP5A_135"/>
<dbReference type="HOGENOM" id="CLU_025885_0_4_6"/>
<dbReference type="OrthoDB" id="9805666at2"/>
<dbReference type="Proteomes" id="UP000006904">
    <property type="component" value="Chromosome"/>
</dbReference>
<dbReference type="GO" id="GO:0008833">
    <property type="term" value="F:deoxyribonuclease IV (phage-T4-induced) activity"/>
    <property type="evidence" value="ECO:0007669"/>
    <property type="project" value="UniProtKB-UniRule"/>
</dbReference>
<dbReference type="GO" id="GO:0003677">
    <property type="term" value="F:DNA binding"/>
    <property type="evidence" value="ECO:0007669"/>
    <property type="project" value="InterPro"/>
</dbReference>
<dbReference type="GO" id="GO:0003906">
    <property type="term" value="F:DNA-(apurinic or apyrimidinic site) endonuclease activity"/>
    <property type="evidence" value="ECO:0007669"/>
    <property type="project" value="TreeGrafter"/>
</dbReference>
<dbReference type="GO" id="GO:0008081">
    <property type="term" value="F:phosphoric diester hydrolase activity"/>
    <property type="evidence" value="ECO:0007669"/>
    <property type="project" value="TreeGrafter"/>
</dbReference>
<dbReference type="GO" id="GO:0008270">
    <property type="term" value="F:zinc ion binding"/>
    <property type="evidence" value="ECO:0007669"/>
    <property type="project" value="UniProtKB-UniRule"/>
</dbReference>
<dbReference type="GO" id="GO:0006284">
    <property type="term" value="P:base-excision repair"/>
    <property type="evidence" value="ECO:0007669"/>
    <property type="project" value="TreeGrafter"/>
</dbReference>
<dbReference type="CDD" id="cd00019">
    <property type="entry name" value="AP2Ec"/>
    <property type="match status" value="1"/>
</dbReference>
<dbReference type="FunFam" id="3.20.20.150:FF:000001">
    <property type="entry name" value="Probable endonuclease 4"/>
    <property type="match status" value="1"/>
</dbReference>
<dbReference type="Gene3D" id="3.20.20.150">
    <property type="entry name" value="Divalent-metal-dependent TIM barrel enzymes"/>
    <property type="match status" value="1"/>
</dbReference>
<dbReference type="HAMAP" id="MF_00152">
    <property type="entry name" value="Nfo"/>
    <property type="match status" value="1"/>
</dbReference>
<dbReference type="InterPro" id="IPR001719">
    <property type="entry name" value="AP_endonuc_2"/>
</dbReference>
<dbReference type="InterPro" id="IPR018246">
    <property type="entry name" value="AP_endonuc_F2_Zn_BS"/>
</dbReference>
<dbReference type="InterPro" id="IPR036237">
    <property type="entry name" value="Xyl_isomerase-like_sf"/>
</dbReference>
<dbReference type="InterPro" id="IPR013022">
    <property type="entry name" value="Xyl_isomerase-like_TIM-brl"/>
</dbReference>
<dbReference type="NCBIfam" id="TIGR00587">
    <property type="entry name" value="nfo"/>
    <property type="match status" value="1"/>
</dbReference>
<dbReference type="NCBIfam" id="NF002199">
    <property type="entry name" value="PRK01060.1-4"/>
    <property type="match status" value="1"/>
</dbReference>
<dbReference type="PANTHER" id="PTHR21445:SF0">
    <property type="entry name" value="APURINIC-APYRIMIDINIC ENDONUCLEASE"/>
    <property type="match status" value="1"/>
</dbReference>
<dbReference type="PANTHER" id="PTHR21445">
    <property type="entry name" value="ENDONUCLEASE IV ENDODEOXYRIBONUCLEASE IV"/>
    <property type="match status" value="1"/>
</dbReference>
<dbReference type="Pfam" id="PF01261">
    <property type="entry name" value="AP_endonuc_2"/>
    <property type="match status" value="1"/>
</dbReference>
<dbReference type="SMART" id="SM00518">
    <property type="entry name" value="AP2Ec"/>
    <property type="match status" value="1"/>
</dbReference>
<dbReference type="SUPFAM" id="SSF51658">
    <property type="entry name" value="Xylose isomerase-like"/>
    <property type="match status" value="1"/>
</dbReference>
<dbReference type="PROSITE" id="PS00729">
    <property type="entry name" value="AP_NUCLEASE_F2_1"/>
    <property type="match status" value="1"/>
</dbReference>
<dbReference type="PROSITE" id="PS00730">
    <property type="entry name" value="AP_NUCLEASE_F2_2"/>
    <property type="match status" value="1"/>
</dbReference>
<dbReference type="PROSITE" id="PS00731">
    <property type="entry name" value="AP_NUCLEASE_F2_3"/>
    <property type="match status" value="1"/>
</dbReference>
<dbReference type="PROSITE" id="PS51432">
    <property type="entry name" value="AP_NUCLEASE_F2_4"/>
    <property type="match status" value="1"/>
</dbReference>
<comment type="function">
    <text evidence="1">Endonuclease IV plays a role in DNA repair. It cleaves phosphodiester bonds at apurinic or apyrimidinic (AP) sites, generating a 3'-hydroxyl group and a 5'-terminal sugar phosphate.</text>
</comment>
<comment type="catalytic activity">
    <reaction evidence="1">
        <text>Endonucleolytic cleavage to 5'-phosphooligonucleotide end-products.</text>
        <dbReference type="EC" id="3.1.21.2"/>
    </reaction>
</comment>
<comment type="cofactor">
    <cofactor evidence="1">
        <name>Zn(2+)</name>
        <dbReference type="ChEBI" id="CHEBI:29105"/>
    </cofactor>
    <text evidence="1">Binds 3 Zn(2+) ions.</text>
</comment>
<comment type="similarity">
    <text evidence="1">Belongs to the AP endonuclease 2 family.</text>
</comment>
<sequence>MNYIGAHVSSSGGLEKTVLRAIQIKATAFSFFTKNQRQWFSPPLIQKKIDQFKAMCIKYSFQPQQILPHSSYLINLGHPIDELLRKSRKSFIDEMIRCSQLGLIFLNFHPGSHLNKITENACLLRVSDSINIALEKTQNVIAVIENTAGQGTNIGYCFEHLSEIIKNIDDKSRVGVCIDTCHLFASGYDLRTKKDCENTFEKFNSLIGLKYLKGIHLNDSKKKINSRVDRHESLGLGEIGTAAFTWIIKNENFSNIPIILETANPMIWEEEIDWLRSQKKL</sequence>
<feature type="chain" id="PRO_1000123320" description="Probable endonuclease 4">
    <location>
        <begin position="1"/>
        <end position="281"/>
    </location>
</feature>
<feature type="binding site" evidence="1">
    <location>
        <position position="69"/>
    </location>
    <ligand>
        <name>Zn(2+)</name>
        <dbReference type="ChEBI" id="CHEBI:29105"/>
        <label>1</label>
    </ligand>
</feature>
<feature type="binding site" evidence="1">
    <location>
        <position position="109"/>
    </location>
    <ligand>
        <name>Zn(2+)</name>
        <dbReference type="ChEBI" id="CHEBI:29105"/>
        <label>1</label>
    </ligand>
</feature>
<feature type="binding site" evidence="1">
    <location>
        <position position="145"/>
    </location>
    <ligand>
        <name>Zn(2+)</name>
        <dbReference type="ChEBI" id="CHEBI:29105"/>
        <label>1</label>
    </ligand>
</feature>
<feature type="binding site" evidence="1">
    <location>
        <position position="145"/>
    </location>
    <ligand>
        <name>Zn(2+)</name>
        <dbReference type="ChEBI" id="CHEBI:29105"/>
        <label>2</label>
    </ligand>
</feature>
<feature type="binding site" evidence="1">
    <location>
        <position position="179"/>
    </location>
    <ligand>
        <name>Zn(2+)</name>
        <dbReference type="ChEBI" id="CHEBI:29105"/>
        <label>2</label>
    </ligand>
</feature>
<feature type="binding site" evidence="1">
    <location>
        <position position="182"/>
    </location>
    <ligand>
        <name>Zn(2+)</name>
        <dbReference type="ChEBI" id="CHEBI:29105"/>
        <label>3</label>
    </ligand>
</feature>
<feature type="binding site" evidence="1">
    <location>
        <position position="216"/>
    </location>
    <ligand>
        <name>Zn(2+)</name>
        <dbReference type="ChEBI" id="CHEBI:29105"/>
        <label>2</label>
    </ligand>
</feature>
<feature type="binding site" evidence="1">
    <location>
        <position position="229"/>
    </location>
    <ligand>
        <name>Zn(2+)</name>
        <dbReference type="ChEBI" id="CHEBI:29105"/>
        <label>3</label>
    </ligand>
</feature>
<feature type="binding site" evidence="1">
    <location>
        <position position="231"/>
    </location>
    <ligand>
        <name>Zn(2+)</name>
        <dbReference type="ChEBI" id="CHEBI:29105"/>
        <label>3</label>
    </ligand>
</feature>
<feature type="binding site" evidence="1">
    <location>
        <position position="261"/>
    </location>
    <ligand>
        <name>Zn(2+)</name>
        <dbReference type="ChEBI" id="CHEBI:29105"/>
        <label>2</label>
    </ligand>
</feature>
<organism>
    <name type="scientific">Buchnera aphidicola subsp. Acyrthosiphon pisum (strain 5A)</name>
    <dbReference type="NCBI Taxonomy" id="563178"/>
    <lineage>
        <taxon>Bacteria</taxon>
        <taxon>Pseudomonadati</taxon>
        <taxon>Pseudomonadota</taxon>
        <taxon>Gammaproteobacteria</taxon>
        <taxon>Enterobacterales</taxon>
        <taxon>Erwiniaceae</taxon>
        <taxon>Buchnera</taxon>
    </lineage>
</organism>